<sequence length="502" mass="54496">MRKAAALASAAMAAAAVAVVSTVLHQRQRRAAKRSERAEAVLLRDLQERCAAPVELLRQVADAMAAEMRAGLAAEGGSDLQMLVTYVDSLPSGGEKGMFYALDLGGTNFRVLRVQLGGKERRIIKQDSEGISIPQHLMSSSSHELFDFVAVALAKFVASEGEDCHLPEGTQRELGFTFSFPVKQKSLASGTLIKWTKSFAIDEMVGKDVVAELNMAIRSQGLDMKVTALVNDTVGTLAAGRYVNHDTIAAVILGTGSNAAYIDHADAIPKWHGSLPKSGNMVINMEWGNFKSSHLPLTEFDQELDAESLNPGKQVYEKSISGMYMGELVRRILLKMAQETRIFGDNIPPKLERPYILRTLDMLIMHHDTSSDLRTVANKLKEVLGIEYTSFTTRKLVLDVCEAIATRGARLAAAGIYGIIQKLGQHSDSPSTRRSVIAVDGGVYKYYTFFSQCMESTLSDMLGQELAPSVMIKHVNDGSGVGAALLAASYSQYHQAESADSS</sequence>
<organism>
    <name type="scientific">Oryza sativa subsp. japonica</name>
    <name type="common">Rice</name>
    <dbReference type="NCBI Taxonomy" id="39947"/>
    <lineage>
        <taxon>Eukaryota</taxon>
        <taxon>Viridiplantae</taxon>
        <taxon>Streptophyta</taxon>
        <taxon>Embryophyta</taxon>
        <taxon>Tracheophyta</taxon>
        <taxon>Spermatophyta</taxon>
        <taxon>Magnoliopsida</taxon>
        <taxon>Liliopsida</taxon>
        <taxon>Poales</taxon>
        <taxon>Poaceae</taxon>
        <taxon>BOP clade</taxon>
        <taxon>Oryzoideae</taxon>
        <taxon>Oryzeae</taxon>
        <taxon>Oryzinae</taxon>
        <taxon>Oryza</taxon>
        <taxon>Oryza sativa</taxon>
    </lineage>
</organism>
<gene>
    <name type="primary">HXK9</name>
    <name type="synonym">HXK5</name>
    <name type="ordered locus">Os01g0722700</name>
    <name type="ordered locus">LOC_Os01g52450</name>
    <name type="ORF">P0690B02.34</name>
</gene>
<feature type="chain" id="PRO_0000247572" description="Hexokinase-9">
    <location>
        <begin position="1"/>
        <end position="502"/>
    </location>
</feature>
<feature type="transmembrane region" description="Helical" evidence="3">
    <location>
        <begin position="5"/>
        <end position="24"/>
    </location>
</feature>
<feature type="domain" description="Hexokinase" evidence="4">
    <location>
        <begin position="37"/>
        <end position="488"/>
    </location>
</feature>
<feature type="region of interest" description="Hexokinase small subdomain" evidence="4">
    <location>
        <begin position="92"/>
        <end position="230"/>
    </location>
</feature>
<feature type="region of interest" description="Hexokinase large subdomain" evidence="4">
    <location>
        <begin position="231"/>
        <end position="477"/>
    </location>
</feature>
<feature type="binding site" evidence="2">
    <location>
        <position position="106"/>
    </location>
    <ligand>
        <name>ADP</name>
        <dbReference type="ChEBI" id="CHEBI:456216"/>
    </ligand>
</feature>
<feature type="binding site" evidence="2">
    <location>
        <position position="107"/>
    </location>
    <ligand>
        <name>ADP</name>
        <dbReference type="ChEBI" id="CHEBI:456216"/>
    </ligand>
</feature>
<feature type="binding site" evidence="2">
    <location>
        <position position="108"/>
    </location>
    <ligand>
        <name>ADP</name>
        <dbReference type="ChEBI" id="CHEBI:456216"/>
    </ligand>
</feature>
<feature type="binding site" evidence="2">
    <location>
        <position position="196"/>
    </location>
    <ligand>
        <name>D-glucose</name>
        <dbReference type="ChEBI" id="CHEBI:4167"/>
    </ligand>
</feature>
<feature type="binding site" evidence="2">
    <location>
        <position position="197"/>
    </location>
    <ligand>
        <name>D-glucose</name>
        <dbReference type="ChEBI" id="CHEBI:4167"/>
    </ligand>
</feature>
<feature type="binding site" evidence="2">
    <location>
        <position position="231"/>
    </location>
    <ligand>
        <name>D-glucose</name>
        <dbReference type="ChEBI" id="CHEBI:4167"/>
    </ligand>
</feature>
<feature type="binding site" evidence="2">
    <location>
        <position position="232"/>
    </location>
    <ligand>
        <name>D-glucose</name>
        <dbReference type="ChEBI" id="CHEBI:4167"/>
    </ligand>
</feature>
<feature type="binding site" evidence="2">
    <location>
        <position position="255"/>
    </location>
    <ligand>
        <name>ADP</name>
        <dbReference type="ChEBI" id="CHEBI:456216"/>
    </ligand>
</feature>
<feature type="binding site" evidence="2">
    <location>
        <position position="258"/>
    </location>
    <ligand>
        <name>D-glucose</name>
        <dbReference type="ChEBI" id="CHEBI:4167"/>
    </ligand>
</feature>
<feature type="binding site" evidence="2">
    <location>
        <position position="286"/>
    </location>
    <ligand>
        <name>D-glucose</name>
        <dbReference type="ChEBI" id="CHEBI:4167"/>
    </ligand>
</feature>
<feature type="binding site" evidence="2">
    <location>
        <position position="317"/>
    </location>
    <ligand>
        <name>D-glucose</name>
        <dbReference type="ChEBI" id="CHEBI:4167"/>
    </ligand>
</feature>
<feature type="binding site" evidence="2">
    <location>
        <position position="442"/>
    </location>
    <ligand>
        <name>ADP</name>
        <dbReference type="ChEBI" id="CHEBI:456216"/>
    </ligand>
</feature>
<accession>Q2KNB7</accession>
<dbReference type="EC" id="2.7.1.1" evidence="7"/>
<dbReference type="EMBL" id="DQ116391">
    <property type="protein sequence ID" value="AAZ93626.1"/>
    <property type="molecule type" value="mRNA"/>
</dbReference>
<dbReference type="EMBL" id="AY884168">
    <property type="protein sequence ID" value="AAX68421.1"/>
    <property type="molecule type" value="mRNA"/>
</dbReference>
<dbReference type="EMBL" id="AP003292">
    <property type="status" value="NOT_ANNOTATED_CDS"/>
    <property type="molecule type" value="Genomic_DNA"/>
</dbReference>
<dbReference type="EMBL" id="AP014957">
    <property type="status" value="NOT_ANNOTATED_CDS"/>
    <property type="molecule type" value="Genomic_DNA"/>
</dbReference>
<dbReference type="RefSeq" id="XP_015614778.1">
    <property type="nucleotide sequence ID" value="XM_015759292.1"/>
</dbReference>
<dbReference type="SMR" id="Q2KNB7"/>
<dbReference type="FunCoup" id="Q2KNB7">
    <property type="interactions" value="1411"/>
</dbReference>
<dbReference type="STRING" id="39947.Q2KNB7"/>
<dbReference type="PaxDb" id="39947-Q2KNB7"/>
<dbReference type="EnsemblPlants" id="Os01t0722700-02">
    <property type="protein sequence ID" value="Os01t0722700-02"/>
    <property type="gene ID" value="Os01g0722700"/>
</dbReference>
<dbReference type="Gramene" id="Os01t0722700-02">
    <property type="protein sequence ID" value="Os01t0722700-02"/>
    <property type="gene ID" value="Os01g0722700"/>
</dbReference>
<dbReference type="eggNOG" id="KOG1369">
    <property type="taxonomic scope" value="Eukaryota"/>
</dbReference>
<dbReference type="InParanoid" id="Q2KNB7"/>
<dbReference type="OrthoDB" id="419537at2759"/>
<dbReference type="BRENDA" id="2.7.1.1">
    <property type="organism ID" value="4460"/>
</dbReference>
<dbReference type="UniPathway" id="UPA00109">
    <property type="reaction ID" value="UER00180"/>
</dbReference>
<dbReference type="UniPathway" id="UPA00242"/>
<dbReference type="Proteomes" id="UP000000763">
    <property type="component" value="Chromosome 1"/>
</dbReference>
<dbReference type="Proteomes" id="UP000059680">
    <property type="component" value="Chromosome 1"/>
</dbReference>
<dbReference type="GO" id="GO:0009707">
    <property type="term" value="C:chloroplast outer membrane"/>
    <property type="evidence" value="ECO:0007669"/>
    <property type="project" value="UniProtKB-SubCell"/>
</dbReference>
<dbReference type="GO" id="GO:0005829">
    <property type="term" value="C:cytosol"/>
    <property type="evidence" value="ECO:0000318"/>
    <property type="project" value="GO_Central"/>
</dbReference>
<dbReference type="GO" id="GO:0005739">
    <property type="term" value="C:mitochondrion"/>
    <property type="evidence" value="ECO:0000318"/>
    <property type="project" value="GO_Central"/>
</dbReference>
<dbReference type="GO" id="GO:0005524">
    <property type="term" value="F:ATP binding"/>
    <property type="evidence" value="ECO:0007669"/>
    <property type="project" value="UniProtKB-KW"/>
</dbReference>
<dbReference type="GO" id="GO:0005536">
    <property type="term" value="F:D-glucose binding"/>
    <property type="evidence" value="ECO:0007669"/>
    <property type="project" value="InterPro"/>
</dbReference>
<dbReference type="GO" id="GO:0008865">
    <property type="term" value="F:fructokinase activity"/>
    <property type="evidence" value="ECO:0000318"/>
    <property type="project" value="GO_Central"/>
</dbReference>
<dbReference type="GO" id="GO:0004340">
    <property type="term" value="F:glucokinase activity"/>
    <property type="evidence" value="ECO:0000318"/>
    <property type="project" value="GO_Central"/>
</dbReference>
<dbReference type="GO" id="GO:0051156">
    <property type="term" value="P:glucose 6-phosphate metabolic process"/>
    <property type="evidence" value="ECO:0000318"/>
    <property type="project" value="GO_Central"/>
</dbReference>
<dbReference type="GO" id="GO:0006006">
    <property type="term" value="P:glucose metabolic process"/>
    <property type="evidence" value="ECO:0000318"/>
    <property type="project" value="GO_Central"/>
</dbReference>
<dbReference type="GO" id="GO:0006096">
    <property type="term" value="P:glycolytic process"/>
    <property type="evidence" value="ECO:0000318"/>
    <property type="project" value="GO_Central"/>
</dbReference>
<dbReference type="GO" id="GO:0001678">
    <property type="term" value="P:intracellular glucose homeostasis"/>
    <property type="evidence" value="ECO:0000318"/>
    <property type="project" value="GO_Central"/>
</dbReference>
<dbReference type="CDD" id="cd24020">
    <property type="entry name" value="ASKHA_NBD_HK_plant"/>
    <property type="match status" value="1"/>
</dbReference>
<dbReference type="FunFam" id="3.30.420.40:FF:000034">
    <property type="entry name" value="Phosphotransferase"/>
    <property type="match status" value="1"/>
</dbReference>
<dbReference type="FunFam" id="3.40.367.20:FF:000003">
    <property type="entry name" value="Phosphotransferase"/>
    <property type="match status" value="1"/>
</dbReference>
<dbReference type="Gene3D" id="3.30.420.40">
    <property type="match status" value="1"/>
</dbReference>
<dbReference type="Gene3D" id="3.40.367.20">
    <property type="match status" value="1"/>
</dbReference>
<dbReference type="InterPro" id="IPR043129">
    <property type="entry name" value="ATPase_NBD"/>
</dbReference>
<dbReference type="InterPro" id="IPR001312">
    <property type="entry name" value="Hexokinase"/>
</dbReference>
<dbReference type="InterPro" id="IPR022673">
    <property type="entry name" value="Hexokinase_C"/>
</dbReference>
<dbReference type="InterPro" id="IPR022672">
    <property type="entry name" value="Hexokinase_N"/>
</dbReference>
<dbReference type="PANTHER" id="PTHR19443">
    <property type="entry name" value="HEXOKINASE"/>
    <property type="match status" value="1"/>
</dbReference>
<dbReference type="PANTHER" id="PTHR19443:SF14">
    <property type="entry name" value="HEXOKINASE-9"/>
    <property type="match status" value="1"/>
</dbReference>
<dbReference type="Pfam" id="PF00349">
    <property type="entry name" value="Hexokinase_1"/>
    <property type="match status" value="1"/>
</dbReference>
<dbReference type="Pfam" id="PF03727">
    <property type="entry name" value="Hexokinase_2"/>
    <property type="match status" value="1"/>
</dbReference>
<dbReference type="PRINTS" id="PR00475">
    <property type="entry name" value="HEXOKINASE"/>
</dbReference>
<dbReference type="SUPFAM" id="SSF53067">
    <property type="entry name" value="Actin-like ATPase domain"/>
    <property type="match status" value="2"/>
</dbReference>
<dbReference type="PROSITE" id="PS51748">
    <property type="entry name" value="HEXOKINASE_2"/>
    <property type="match status" value="1"/>
</dbReference>
<proteinExistence type="evidence at transcript level"/>
<protein>
    <recommendedName>
        <fullName>Hexokinase-9</fullName>
        <ecNumber evidence="7">2.7.1.1</ecNumber>
    </recommendedName>
    <alternativeName>
        <fullName>Hexokinase-5</fullName>
    </alternativeName>
</protein>
<keyword id="KW-0067">ATP-binding</keyword>
<keyword id="KW-0150">Chloroplast</keyword>
<keyword id="KW-0324">Glycolysis</keyword>
<keyword id="KW-0418">Kinase</keyword>
<keyword id="KW-0472">Membrane</keyword>
<keyword id="KW-0547">Nucleotide-binding</keyword>
<keyword id="KW-0934">Plastid</keyword>
<keyword id="KW-1002">Plastid outer membrane</keyword>
<keyword id="KW-1185">Reference proteome</keyword>
<keyword id="KW-0808">Transferase</keyword>
<keyword id="KW-0812">Transmembrane</keyword>
<keyword id="KW-1133">Transmembrane helix</keyword>
<reference key="1">
    <citation type="journal article" date="2006" name="Planta">
        <title>Structure, expression, and functional analysis of the hexokinase gene family in rice (Oryza sativa L.).</title>
        <authorList>
            <person name="Cho J.-I."/>
            <person name="Ryoo N."/>
            <person name="Ko S."/>
            <person name="Lee S.-K."/>
            <person name="Lee J."/>
            <person name="Jung K.-H."/>
            <person name="Lee Y.-H."/>
            <person name="Bhoo S.H."/>
            <person name="Winderickx J."/>
            <person name="An G."/>
            <person name="Hahn T.-R."/>
            <person name="Jeon J.-S."/>
        </authorList>
    </citation>
    <scope>NUCLEOTIDE SEQUENCE [MRNA]</scope>
    <scope>FUNCTION</scope>
    <scope>TISSUE SPECIFICITY</scope>
    <scope>DEVELOPMENTAL STAGE</scope>
    <scope>INDUCTION</scope>
    <scope>NOMENCLATURE</scope>
    <source>
        <strain>cv. Jinmi</strain>
    </source>
</reference>
<reference key="2">
    <citation type="submission" date="2005-01" db="EMBL/GenBank/DDBJ databases">
        <title>The hexokinase gene family in rice.</title>
        <authorList>
            <person name="Wang Y.D."/>
            <person name="Cheng W."/>
            <person name="Wang X.S."/>
            <person name="Zhou X.J."/>
        </authorList>
    </citation>
    <scope>NUCLEOTIDE SEQUENCE [MRNA]</scope>
    <source>
        <strain>cv. Zhonghua 15</strain>
        <tissue>Flower</tissue>
    </source>
</reference>
<reference key="3">
    <citation type="journal article" date="2002" name="Nature">
        <title>The genome sequence and structure of rice chromosome 1.</title>
        <authorList>
            <person name="Sasaki T."/>
            <person name="Matsumoto T."/>
            <person name="Yamamoto K."/>
            <person name="Sakata K."/>
            <person name="Baba T."/>
            <person name="Katayose Y."/>
            <person name="Wu J."/>
            <person name="Niimura Y."/>
            <person name="Cheng Z."/>
            <person name="Nagamura Y."/>
            <person name="Antonio B.A."/>
            <person name="Kanamori H."/>
            <person name="Hosokawa S."/>
            <person name="Masukawa M."/>
            <person name="Arikawa K."/>
            <person name="Chiden Y."/>
            <person name="Hayashi M."/>
            <person name="Okamoto M."/>
            <person name="Ando T."/>
            <person name="Aoki H."/>
            <person name="Arita K."/>
            <person name="Hamada M."/>
            <person name="Harada C."/>
            <person name="Hijishita S."/>
            <person name="Honda M."/>
            <person name="Ichikawa Y."/>
            <person name="Idonuma A."/>
            <person name="Iijima M."/>
            <person name="Ikeda M."/>
            <person name="Ikeno M."/>
            <person name="Ito S."/>
            <person name="Ito T."/>
            <person name="Ito Y."/>
            <person name="Ito Y."/>
            <person name="Iwabuchi A."/>
            <person name="Kamiya K."/>
            <person name="Karasawa W."/>
            <person name="Katagiri S."/>
            <person name="Kikuta A."/>
            <person name="Kobayashi N."/>
            <person name="Kono I."/>
            <person name="Machita K."/>
            <person name="Maehara T."/>
            <person name="Mizuno H."/>
            <person name="Mizubayashi T."/>
            <person name="Mukai Y."/>
            <person name="Nagasaki H."/>
            <person name="Nakashima M."/>
            <person name="Nakama Y."/>
            <person name="Nakamichi Y."/>
            <person name="Nakamura M."/>
            <person name="Namiki N."/>
            <person name="Negishi M."/>
            <person name="Ohta I."/>
            <person name="Ono N."/>
            <person name="Saji S."/>
            <person name="Sakai K."/>
            <person name="Shibata M."/>
            <person name="Shimokawa T."/>
            <person name="Shomura A."/>
            <person name="Song J."/>
            <person name="Takazaki Y."/>
            <person name="Terasawa K."/>
            <person name="Tsuji K."/>
            <person name="Waki K."/>
            <person name="Yamagata H."/>
            <person name="Yamane H."/>
            <person name="Yoshiki S."/>
            <person name="Yoshihara R."/>
            <person name="Yukawa K."/>
            <person name="Zhong H."/>
            <person name="Iwama H."/>
            <person name="Endo T."/>
            <person name="Ito H."/>
            <person name="Hahn J.H."/>
            <person name="Kim H.-I."/>
            <person name="Eun M.-Y."/>
            <person name="Yano M."/>
            <person name="Jiang J."/>
            <person name="Gojobori T."/>
        </authorList>
    </citation>
    <scope>NUCLEOTIDE SEQUENCE [LARGE SCALE GENOMIC DNA]</scope>
    <source>
        <strain>cv. Nipponbare</strain>
    </source>
</reference>
<reference key="4">
    <citation type="journal article" date="2005" name="Nature">
        <title>The map-based sequence of the rice genome.</title>
        <authorList>
            <consortium name="International rice genome sequencing project (IRGSP)"/>
        </authorList>
    </citation>
    <scope>NUCLEOTIDE SEQUENCE [LARGE SCALE GENOMIC DNA]</scope>
    <source>
        <strain>cv. Nipponbare</strain>
    </source>
</reference>
<reference key="5">
    <citation type="journal article" date="2013" name="Rice">
        <title>Improvement of the Oryza sativa Nipponbare reference genome using next generation sequence and optical map data.</title>
        <authorList>
            <person name="Kawahara Y."/>
            <person name="de la Bastide M."/>
            <person name="Hamilton J.P."/>
            <person name="Kanamori H."/>
            <person name="McCombie W.R."/>
            <person name="Ouyang S."/>
            <person name="Schwartz D.C."/>
            <person name="Tanaka T."/>
            <person name="Wu J."/>
            <person name="Zhou S."/>
            <person name="Childs K.L."/>
            <person name="Davidson R.M."/>
            <person name="Lin H."/>
            <person name="Quesada-Ocampo L."/>
            <person name="Vaillancourt B."/>
            <person name="Sakai H."/>
            <person name="Lee S.S."/>
            <person name="Kim J."/>
            <person name="Numa H."/>
            <person name="Itoh T."/>
            <person name="Buell C.R."/>
            <person name="Matsumoto T."/>
        </authorList>
    </citation>
    <scope>GENOME REANNOTATION</scope>
    <source>
        <strain>cv. Nipponbare</strain>
    </source>
</reference>
<name>HXK9_ORYSJ</name>
<comment type="function">
    <text evidence="5">Fructose and glucose phosphorylating enzyme.</text>
</comment>
<comment type="catalytic activity">
    <reaction evidence="7">
        <text>a D-hexose + ATP = a D-hexose 6-phosphate + ADP + H(+)</text>
        <dbReference type="Rhea" id="RHEA:22740"/>
        <dbReference type="ChEBI" id="CHEBI:4194"/>
        <dbReference type="ChEBI" id="CHEBI:15378"/>
        <dbReference type="ChEBI" id="CHEBI:30616"/>
        <dbReference type="ChEBI" id="CHEBI:229467"/>
        <dbReference type="ChEBI" id="CHEBI:456216"/>
        <dbReference type="EC" id="2.7.1.1"/>
    </reaction>
    <physiologicalReaction direction="left-to-right" evidence="7">
        <dbReference type="Rhea" id="RHEA:22741"/>
    </physiologicalReaction>
</comment>
<comment type="catalytic activity">
    <reaction evidence="7">
        <text>D-fructose + ATP = D-fructose 6-phosphate + ADP + H(+)</text>
        <dbReference type="Rhea" id="RHEA:16125"/>
        <dbReference type="ChEBI" id="CHEBI:15378"/>
        <dbReference type="ChEBI" id="CHEBI:30616"/>
        <dbReference type="ChEBI" id="CHEBI:37721"/>
        <dbReference type="ChEBI" id="CHEBI:61527"/>
        <dbReference type="ChEBI" id="CHEBI:456216"/>
        <dbReference type="EC" id="2.7.1.1"/>
    </reaction>
    <physiologicalReaction direction="left-to-right" evidence="7">
        <dbReference type="Rhea" id="RHEA:16126"/>
    </physiologicalReaction>
</comment>
<comment type="catalytic activity">
    <reaction evidence="7">
        <text>D-glucose + ATP = D-glucose 6-phosphate + ADP + H(+)</text>
        <dbReference type="Rhea" id="RHEA:17825"/>
        <dbReference type="ChEBI" id="CHEBI:4167"/>
        <dbReference type="ChEBI" id="CHEBI:15378"/>
        <dbReference type="ChEBI" id="CHEBI:30616"/>
        <dbReference type="ChEBI" id="CHEBI:61548"/>
        <dbReference type="ChEBI" id="CHEBI:456216"/>
        <dbReference type="EC" id="2.7.1.1"/>
    </reaction>
    <physiologicalReaction direction="left-to-right" evidence="7">
        <dbReference type="Rhea" id="RHEA:17826"/>
    </physiologicalReaction>
</comment>
<comment type="pathway">
    <text evidence="7">Carbohydrate metabolism; hexose metabolism.</text>
</comment>
<comment type="pathway">
    <text evidence="7">Carbohydrate degradation; glycolysis; D-glyceraldehyde 3-phosphate and glycerone phosphate from D-glucose: step 1/4.</text>
</comment>
<comment type="subcellular location">
    <subcellularLocation>
        <location evidence="1">Plastid</location>
        <location evidence="1">Chloroplast outer membrane</location>
        <topology evidence="1">Single-pass membrane protein</topology>
    </subcellularLocation>
</comment>
<comment type="tissue specificity">
    <text evidence="5">Expressed in roots, leaves, flowers, immature seeds, endosperm and seed coat.</text>
</comment>
<comment type="developmental stage">
    <text evidence="5">Expressed during flower development until 15 days after flowering.</text>
</comment>
<comment type="induction">
    <text evidence="5">Not induced by glucose or fructose treatment in leaves.</text>
</comment>
<comment type="similarity">
    <text evidence="4 6">Belongs to the hexokinase family.</text>
</comment>
<evidence type="ECO:0000250" key="1"/>
<evidence type="ECO:0000250" key="2">
    <source>
        <dbReference type="UniProtKB" id="Q8LQ68"/>
    </source>
</evidence>
<evidence type="ECO:0000255" key="3"/>
<evidence type="ECO:0000255" key="4">
    <source>
        <dbReference type="PROSITE-ProRule" id="PRU01084"/>
    </source>
</evidence>
<evidence type="ECO:0000269" key="5">
    <source>
    </source>
</evidence>
<evidence type="ECO:0000305" key="6"/>
<evidence type="ECO:0000305" key="7">
    <source>
    </source>
</evidence>